<name>A28_RFVKA</name>
<feature type="chain" id="PRO_0000099297" description="Envelope protein A28 homolog">
    <location>
        <begin position="1"/>
        <end position="140"/>
    </location>
</feature>
<feature type="transmembrane region" description="Helical; Signal-anchor for type II membrane protein" evidence="2">
    <location>
        <begin position="1"/>
        <end position="21"/>
    </location>
</feature>
<feature type="topological domain" description="Virion surface" evidence="2">
    <location>
        <begin position="22"/>
        <end position="140"/>
    </location>
</feature>
<sequence>MNPVTVFFVVVVTVAACMILFQVYSIYLNYDNIKEFNAMHSPLEYSKMVNVTAIDRRIQDANDDIYDAKQKWRCVKLDDSYVSLSMFGYKSDGIGIRRFRTLNSCIDYTFSTSTHSSILNPCISPNDPKSRECTFLKSVL</sequence>
<gene>
    <name type="ordered locus">s116L</name>
</gene>
<protein>
    <recommendedName>
        <fullName>Envelope protein A28 homolog</fullName>
    </recommendedName>
    <alternativeName>
        <fullName>Protein Gp116</fullName>
    </alternativeName>
</protein>
<comment type="function">
    <text evidence="1">Envelope protein required for virus entry into host cell and for cell-cell fusion (syncytium formation).</text>
</comment>
<comment type="subcellular location">
    <subcellularLocation>
        <location evidence="3">Virion membrane</location>
        <topology evidence="3">Single-pass type II membrane protein</topology>
    </subcellularLocation>
    <text evidence="1">Component of the intracellular mature virion (IMV) membrane.</text>
</comment>
<comment type="PTM">
    <text evidence="1">Contains two intramolecular disulfide bonds. They are created by the viral disulfide bond formation pathway, a poxvirus-specific pathway that operates on the cytoplasmic side of the MV membranes (By similarity).</text>
</comment>
<comment type="similarity">
    <text evidence="3">Belongs to the poxviridae A28 protein family.</text>
</comment>
<dbReference type="EMBL" id="AF170722">
    <property type="protein sequence ID" value="AAF17999.1"/>
    <property type="molecule type" value="Genomic_DNA"/>
</dbReference>
<dbReference type="RefSeq" id="NP_052005.1">
    <property type="nucleotide sequence ID" value="NC_001266.1"/>
</dbReference>
<dbReference type="SMR" id="Q9Q8W2"/>
<dbReference type="KEGG" id="vg:1486960"/>
<dbReference type="Proteomes" id="UP000000868">
    <property type="component" value="Segment"/>
</dbReference>
<dbReference type="GO" id="GO:0016020">
    <property type="term" value="C:membrane"/>
    <property type="evidence" value="ECO:0007669"/>
    <property type="project" value="UniProtKB-KW"/>
</dbReference>
<dbReference type="GO" id="GO:0019031">
    <property type="term" value="C:viral envelope"/>
    <property type="evidence" value="ECO:0007669"/>
    <property type="project" value="UniProtKB-KW"/>
</dbReference>
<dbReference type="GO" id="GO:0055036">
    <property type="term" value="C:virion membrane"/>
    <property type="evidence" value="ECO:0007669"/>
    <property type="project" value="UniProtKB-SubCell"/>
</dbReference>
<dbReference type="GO" id="GO:0039663">
    <property type="term" value="P:membrane fusion involved in viral entry into host cell"/>
    <property type="evidence" value="ECO:0007669"/>
    <property type="project" value="UniProtKB-KW"/>
</dbReference>
<dbReference type="GO" id="GO:0046718">
    <property type="term" value="P:symbiont entry into host cell"/>
    <property type="evidence" value="ECO:0007669"/>
    <property type="project" value="UniProtKB-KW"/>
</dbReference>
<dbReference type="InterPro" id="IPR007664">
    <property type="entry name" value="Poxvirus_A28"/>
</dbReference>
<dbReference type="Pfam" id="PF04584">
    <property type="entry name" value="Pox_A28"/>
    <property type="match status" value="1"/>
</dbReference>
<organismHost>
    <name type="scientific">Oryctolagus cuniculus</name>
    <name type="common">Rabbit</name>
    <dbReference type="NCBI Taxonomy" id="9986"/>
</organismHost>
<accession>Q9Q8W2</accession>
<proteinExistence type="inferred from homology"/>
<reference key="1">
    <citation type="journal article" date="1999" name="Virology">
        <title>The complete genome sequence of shope (Rabbit) fibroma virus.</title>
        <authorList>
            <person name="Willer D.O."/>
            <person name="McFadden G."/>
            <person name="Evans D.H."/>
        </authorList>
    </citation>
    <scope>NUCLEOTIDE SEQUENCE [LARGE SCALE GENOMIC DNA]</scope>
</reference>
<organism>
    <name type="scientific">Rabbit fibroma virus (strain Kasza)</name>
    <name type="common">RFV</name>
    <name type="synonym">Shope fibroma virus (strain Kasza)</name>
    <dbReference type="NCBI Taxonomy" id="10272"/>
    <lineage>
        <taxon>Viruses</taxon>
        <taxon>Varidnaviria</taxon>
        <taxon>Bamfordvirae</taxon>
        <taxon>Nucleocytoviricota</taxon>
        <taxon>Pokkesviricetes</taxon>
        <taxon>Chitovirales</taxon>
        <taxon>Poxviridae</taxon>
        <taxon>Chordopoxvirinae</taxon>
        <taxon>Leporipoxvirus</taxon>
        <taxon>Rabbit fibroma virus</taxon>
    </lineage>
</organism>
<evidence type="ECO:0000250" key="1"/>
<evidence type="ECO:0000255" key="2"/>
<evidence type="ECO:0000305" key="3"/>
<keyword id="KW-1015">Disulfide bond</keyword>
<keyword id="KW-1168">Fusion of virus membrane with host membrane</keyword>
<keyword id="KW-0426">Late protein</keyword>
<keyword id="KW-0472">Membrane</keyword>
<keyword id="KW-1185">Reference proteome</keyword>
<keyword id="KW-0735">Signal-anchor</keyword>
<keyword id="KW-0812">Transmembrane</keyword>
<keyword id="KW-1133">Transmembrane helix</keyword>
<keyword id="KW-0261">Viral envelope protein</keyword>
<keyword id="KW-1162">Viral penetration into host cytoplasm</keyword>
<keyword id="KW-0946">Virion</keyword>
<keyword id="KW-1160">Virus entry into host cell</keyword>